<dbReference type="EMBL" id="AE015927">
    <property type="protein sequence ID" value="AAO37047.1"/>
    <property type="molecule type" value="Genomic_DNA"/>
</dbReference>
<dbReference type="RefSeq" id="WP_011100708.1">
    <property type="nucleotide sequence ID" value="NC_004557.1"/>
</dbReference>
<dbReference type="SMR" id="Q890P8"/>
<dbReference type="STRING" id="212717.CTC_02590"/>
<dbReference type="GeneID" id="24254149"/>
<dbReference type="KEGG" id="ctc:CTC_02590"/>
<dbReference type="HOGENOM" id="CLU_061015_2_1_9"/>
<dbReference type="OrthoDB" id="9806626at2"/>
<dbReference type="Proteomes" id="UP000001412">
    <property type="component" value="Chromosome"/>
</dbReference>
<dbReference type="GO" id="GO:1990904">
    <property type="term" value="C:ribonucleoprotein complex"/>
    <property type="evidence" value="ECO:0007669"/>
    <property type="project" value="UniProtKB-KW"/>
</dbReference>
<dbReference type="GO" id="GO:0005840">
    <property type="term" value="C:ribosome"/>
    <property type="evidence" value="ECO:0007669"/>
    <property type="project" value="UniProtKB-KW"/>
</dbReference>
<dbReference type="GO" id="GO:0019843">
    <property type="term" value="F:rRNA binding"/>
    <property type="evidence" value="ECO:0007669"/>
    <property type="project" value="UniProtKB-UniRule"/>
</dbReference>
<dbReference type="GO" id="GO:0003735">
    <property type="term" value="F:structural constituent of ribosome"/>
    <property type="evidence" value="ECO:0007669"/>
    <property type="project" value="InterPro"/>
</dbReference>
<dbReference type="GO" id="GO:0000049">
    <property type="term" value="F:tRNA binding"/>
    <property type="evidence" value="ECO:0007669"/>
    <property type="project" value="UniProtKB-UniRule"/>
</dbReference>
<dbReference type="GO" id="GO:0006412">
    <property type="term" value="P:translation"/>
    <property type="evidence" value="ECO:0007669"/>
    <property type="project" value="UniProtKB-UniRule"/>
</dbReference>
<dbReference type="FunFam" id="3.30.1440.10:FF:000001">
    <property type="entry name" value="50S ribosomal protein L5"/>
    <property type="match status" value="1"/>
</dbReference>
<dbReference type="Gene3D" id="3.30.1440.10">
    <property type="match status" value="1"/>
</dbReference>
<dbReference type="HAMAP" id="MF_01333_B">
    <property type="entry name" value="Ribosomal_uL5_B"/>
    <property type="match status" value="1"/>
</dbReference>
<dbReference type="InterPro" id="IPR002132">
    <property type="entry name" value="Ribosomal_uL5"/>
</dbReference>
<dbReference type="InterPro" id="IPR020930">
    <property type="entry name" value="Ribosomal_uL5_bac-type"/>
</dbReference>
<dbReference type="InterPro" id="IPR031309">
    <property type="entry name" value="Ribosomal_uL5_C"/>
</dbReference>
<dbReference type="InterPro" id="IPR020929">
    <property type="entry name" value="Ribosomal_uL5_CS"/>
</dbReference>
<dbReference type="InterPro" id="IPR022803">
    <property type="entry name" value="Ribosomal_uL5_dom_sf"/>
</dbReference>
<dbReference type="InterPro" id="IPR031310">
    <property type="entry name" value="Ribosomal_uL5_N"/>
</dbReference>
<dbReference type="NCBIfam" id="NF000585">
    <property type="entry name" value="PRK00010.1"/>
    <property type="match status" value="1"/>
</dbReference>
<dbReference type="PANTHER" id="PTHR11994">
    <property type="entry name" value="60S RIBOSOMAL PROTEIN L11-RELATED"/>
    <property type="match status" value="1"/>
</dbReference>
<dbReference type="Pfam" id="PF00281">
    <property type="entry name" value="Ribosomal_L5"/>
    <property type="match status" value="1"/>
</dbReference>
<dbReference type="Pfam" id="PF00673">
    <property type="entry name" value="Ribosomal_L5_C"/>
    <property type="match status" value="1"/>
</dbReference>
<dbReference type="PIRSF" id="PIRSF002161">
    <property type="entry name" value="Ribosomal_L5"/>
    <property type="match status" value="1"/>
</dbReference>
<dbReference type="SUPFAM" id="SSF55282">
    <property type="entry name" value="RL5-like"/>
    <property type="match status" value="1"/>
</dbReference>
<dbReference type="PROSITE" id="PS00358">
    <property type="entry name" value="RIBOSOMAL_L5"/>
    <property type="match status" value="1"/>
</dbReference>
<accession>Q890P8</accession>
<evidence type="ECO:0000255" key="1">
    <source>
        <dbReference type="HAMAP-Rule" id="MF_01333"/>
    </source>
</evidence>
<evidence type="ECO:0000305" key="2"/>
<name>RL5_CLOTE</name>
<feature type="chain" id="PRO_0000124918" description="Large ribosomal subunit protein uL5">
    <location>
        <begin position="1"/>
        <end position="180"/>
    </location>
</feature>
<gene>
    <name evidence="1" type="primary">rplE</name>
    <name type="ordered locus">CTC_02590</name>
</gene>
<sequence>MVPRLQEKYEKEVIPALIEKFGYKNIMEVPKLEKIVINMGVGEAKENQKMLESAVSDLSIIAGQKPIVTKAKKSVANFKIRENMPIGCKVTLRKVKMYEFADKLMNVALPRVRDFRGVSSKSFDGRGNYSLGVKEQLMFPEIEYDKVDKVRGMDIIFVTTAKTDEEARELLRFLGMPFAH</sequence>
<reference key="1">
    <citation type="journal article" date="2003" name="Proc. Natl. Acad. Sci. U.S.A.">
        <title>The genome sequence of Clostridium tetani, the causative agent of tetanus disease.</title>
        <authorList>
            <person name="Brueggemann H."/>
            <person name="Baeumer S."/>
            <person name="Fricke W.F."/>
            <person name="Wiezer A."/>
            <person name="Liesegang H."/>
            <person name="Decker I."/>
            <person name="Herzberg C."/>
            <person name="Martinez-Arias R."/>
            <person name="Merkl R."/>
            <person name="Henne A."/>
            <person name="Gottschalk G."/>
        </authorList>
    </citation>
    <scope>NUCLEOTIDE SEQUENCE [LARGE SCALE GENOMIC DNA]</scope>
    <source>
        <strain>Massachusetts / E88</strain>
    </source>
</reference>
<protein>
    <recommendedName>
        <fullName evidence="1">Large ribosomal subunit protein uL5</fullName>
    </recommendedName>
    <alternativeName>
        <fullName evidence="2">50S ribosomal protein L5</fullName>
    </alternativeName>
</protein>
<comment type="function">
    <text evidence="1">This is one of the proteins that bind and probably mediate the attachment of the 5S RNA into the large ribosomal subunit, where it forms part of the central protuberance. In the 70S ribosome it contacts protein S13 of the 30S subunit (bridge B1b), connecting the 2 subunits; this bridge is implicated in subunit movement. Contacts the P site tRNA; the 5S rRNA and some of its associated proteins might help stabilize positioning of ribosome-bound tRNAs.</text>
</comment>
<comment type="subunit">
    <text evidence="1">Part of the 50S ribosomal subunit; part of the 5S rRNA/L5/L18/L25 subcomplex. Contacts the 5S rRNA and the P site tRNA. Forms a bridge to the 30S subunit in the 70S ribosome.</text>
</comment>
<comment type="similarity">
    <text evidence="1">Belongs to the universal ribosomal protein uL5 family.</text>
</comment>
<proteinExistence type="inferred from homology"/>
<organism>
    <name type="scientific">Clostridium tetani (strain Massachusetts / E88)</name>
    <dbReference type="NCBI Taxonomy" id="212717"/>
    <lineage>
        <taxon>Bacteria</taxon>
        <taxon>Bacillati</taxon>
        <taxon>Bacillota</taxon>
        <taxon>Clostridia</taxon>
        <taxon>Eubacteriales</taxon>
        <taxon>Clostridiaceae</taxon>
        <taxon>Clostridium</taxon>
    </lineage>
</organism>
<keyword id="KW-1185">Reference proteome</keyword>
<keyword id="KW-0687">Ribonucleoprotein</keyword>
<keyword id="KW-0689">Ribosomal protein</keyword>
<keyword id="KW-0694">RNA-binding</keyword>
<keyword id="KW-0699">rRNA-binding</keyword>
<keyword id="KW-0820">tRNA-binding</keyword>